<protein>
    <recommendedName>
        <fullName>FAD-linked sulfhydryl oxidase erv2</fullName>
        <ecNumber>1.8.3.2</ecNumber>
    </recommendedName>
</protein>
<feature type="chain" id="PRO_0000339122" description="FAD-linked sulfhydryl oxidase erv2">
    <location>
        <begin position="1"/>
        <end position="192"/>
    </location>
</feature>
<feature type="topological domain" description="Cytoplasmic" evidence="3">
    <location>
        <begin position="1"/>
        <end position="8"/>
    </location>
</feature>
<feature type="transmembrane region" description="Helical; Signal-anchor" evidence="3">
    <location>
        <begin position="9"/>
        <end position="29"/>
    </location>
</feature>
<feature type="topological domain" description="Lumenal" evidence="3">
    <location>
        <begin position="30"/>
        <end position="192"/>
    </location>
</feature>
<feature type="domain" description="ERV/ALR sulfhydryl oxidase" evidence="4">
    <location>
        <begin position="61"/>
        <end position="162"/>
    </location>
</feature>
<feature type="binding site" evidence="2">
    <location>
        <position position="74"/>
    </location>
    <ligand>
        <name>FAD</name>
        <dbReference type="ChEBI" id="CHEBI:57692"/>
    </ligand>
</feature>
<feature type="binding site" evidence="2">
    <location>
        <position position="138"/>
    </location>
    <ligand>
        <name>FAD</name>
        <dbReference type="ChEBI" id="CHEBI:57692"/>
    </ligand>
</feature>
<feature type="binding site" evidence="2">
    <location>
        <position position="141"/>
    </location>
    <ligand>
        <name>FAD</name>
        <dbReference type="ChEBI" id="CHEBI:57692"/>
    </ligand>
</feature>
<feature type="binding site" evidence="2">
    <location>
        <position position="145"/>
    </location>
    <ligand>
        <name>FAD</name>
        <dbReference type="ChEBI" id="CHEBI:57692"/>
    </ligand>
</feature>
<feature type="binding site" evidence="2">
    <location>
        <position position="162"/>
    </location>
    <ligand>
        <name>FAD</name>
        <dbReference type="ChEBI" id="CHEBI:57692"/>
    </ligand>
</feature>
<feature type="disulfide bond" evidence="4">
    <location>
        <begin position="138"/>
        <end position="155"/>
    </location>
</feature>
<accession>Q9Y806</accession>
<reference key="1">
    <citation type="journal article" date="2002" name="Nature">
        <title>The genome sequence of Schizosaccharomyces pombe.</title>
        <authorList>
            <person name="Wood V."/>
            <person name="Gwilliam R."/>
            <person name="Rajandream M.A."/>
            <person name="Lyne M.H."/>
            <person name="Lyne R."/>
            <person name="Stewart A."/>
            <person name="Sgouros J.G."/>
            <person name="Peat N."/>
            <person name="Hayles J."/>
            <person name="Baker S.G."/>
            <person name="Basham D."/>
            <person name="Bowman S."/>
            <person name="Brooks K."/>
            <person name="Brown D."/>
            <person name="Brown S."/>
            <person name="Chillingworth T."/>
            <person name="Churcher C.M."/>
            <person name="Collins M."/>
            <person name="Connor R."/>
            <person name="Cronin A."/>
            <person name="Davis P."/>
            <person name="Feltwell T."/>
            <person name="Fraser A."/>
            <person name="Gentles S."/>
            <person name="Goble A."/>
            <person name="Hamlin N."/>
            <person name="Harris D.E."/>
            <person name="Hidalgo J."/>
            <person name="Hodgson G."/>
            <person name="Holroyd S."/>
            <person name="Hornsby T."/>
            <person name="Howarth S."/>
            <person name="Huckle E.J."/>
            <person name="Hunt S."/>
            <person name="Jagels K."/>
            <person name="James K.D."/>
            <person name="Jones L."/>
            <person name="Jones M."/>
            <person name="Leather S."/>
            <person name="McDonald S."/>
            <person name="McLean J."/>
            <person name="Mooney P."/>
            <person name="Moule S."/>
            <person name="Mungall K.L."/>
            <person name="Murphy L.D."/>
            <person name="Niblett D."/>
            <person name="Odell C."/>
            <person name="Oliver K."/>
            <person name="O'Neil S."/>
            <person name="Pearson D."/>
            <person name="Quail M.A."/>
            <person name="Rabbinowitsch E."/>
            <person name="Rutherford K.M."/>
            <person name="Rutter S."/>
            <person name="Saunders D."/>
            <person name="Seeger K."/>
            <person name="Sharp S."/>
            <person name="Skelton J."/>
            <person name="Simmonds M.N."/>
            <person name="Squares R."/>
            <person name="Squares S."/>
            <person name="Stevens K."/>
            <person name="Taylor K."/>
            <person name="Taylor R.G."/>
            <person name="Tivey A."/>
            <person name="Walsh S.V."/>
            <person name="Warren T."/>
            <person name="Whitehead S."/>
            <person name="Woodward J.R."/>
            <person name="Volckaert G."/>
            <person name="Aert R."/>
            <person name="Robben J."/>
            <person name="Grymonprez B."/>
            <person name="Weltjens I."/>
            <person name="Vanstreels E."/>
            <person name="Rieger M."/>
            <person name="Schaefer M."/>
            <person name="Mueller-Auer S."/>
            <person name="Gabel C."/>
            <person name="Fuchs M."/>
            <person name="Duesterhoeft A."/>
            <person name="Fritzc C."/>
            <person name="Holzer E."/>
            <person name="Moestl D."/>
            <person name="Hilbert H."/>
            <person name="Borzym K."/>
            <person name="Langer I."/>
            <person name="Beck A."/>
            <person name="Lehrach H."/>
            <person name="Reinhardt R."/>
            <person name="Pohl T.M."/>
            <person name="Eger P."/>
            <person name="Zimmermann W."/>
            <person name="Wedler H."/>
            <person name="Wambutt R."/>
            <person name="Purnelle B."/>
            <person name="Goffeau A."/>
            <person name="Cadieu E."/>
            <person name="Dreano S."/>
            <person name="Gloux S."/>
            <person name="Lelaure V."/>
            <person name="Mottier S."/>
            <person name="Galibert F."/>
            <person name="Aves S.J."/>
            <person name="Xiang Z."/>
            <person name="Hunt C."/>
            <person name="Moore K."/>
            <person name="Hurst S.M."/>
            <person name="Lucas M."/>
            <person name="Rochet M."/>
            <person name="Gaillardin C."/>
            <person name="Tallada V.A."/>
            <person name="Garzon A."/>
            <person name="Thode G."/>
            <person name="Daga R.R."/>
            <person name="Cruzado L."/>
            <person name="Jimenez J."/>
            <person name="Sanchez M."/>
            <person name="del Rey F."/>
            <person name="Benito J."/>
            <person name="Dominguez A."/>
            <person name="Revuelta J.L."/>
            <person name="Moreno S."/>
            <person name="Armstrong J."/>
            <person name="Forsburg S.L."/>
            <person name="Cerutti L."/>
            <person name="Lowe T."/>
            <person name="McCombie W.R."/>
            <person name="Paulsen I."/>
            <person name="Potashkin J."/>
            <person name="Shpakovski G.V."/>
            <person name="Ussery D."/>
            <person name="Barrell B.G."/>
            <person name="Nurse P."/>
        </authorList>
    </citation>
    <scope>NUCLEOTIDE SEQUENCE [LARGE SCALE GENOMIC DNA]</scope>
    <source>
        <strain>972 / ATCC 24843</strain>
    </source>
</reference>
<reference key="2">
    <citation type="journal article" date="2006" name="Nat. Biotechnol.">
        <title>ORFeome cloning and global analysis of protein localization in the fission yeast Schizosaccharomyces pombe.</title>
        <authorList>
            <person name="Matsuyama A."/>
            <person name="Arai R."/>
            <person name="Yashiroda Y."/>
            <person name="Shirai A."/>
            <person name="Kamata A."/>
            <person name="Sekido S."/>
            <person name="Kobayashi Y."/>
            <person name="Hashimoto A."/>
            <person name="Hamamoto M."/>
            <person name="Hiraoka Y."/>
            <person name="Horinouchi S."/>
            <person name="Yoshida M."/>
        </authorList>
    </citation>
    <scope>SUBCELLULAR LOCATION [LARGE SCALE ANALYSIS]</scope>
</reference>
<sequence>MILNRRIQVILPTLLILSFIIWIFHSVMVDKDWRLFMPEIKSLPDREGQGRKPIEMMSTKHDNNTNNLMVNAYWKLIHTVVSNYPNRPTLDERDILRHYLFSSAITMPCGEYSVELQKILDVHPPQTSSRKAATTWACKVHNQLNEKMNQPKTSCDGFNERYVIGSPTYRESEAENVPERVQVINEDHDYSG</sequence>
<organism>
    <name type="scientific">Schizosaccharomyces pombe (strain 972 / ATCC 24843)</name>
    <name type="common">Fission yeast</name>
    <dbReference type="NCBI Taxonomy" id="284812"/>
    <lineage>
        <taxon>Eukaryota</taxon>
        <taxon>Fungi</taxon>
        <taxon>Dikarya</taxon>
        <taxon>Ascomycota</taxon>
        <taxon>Taphrinomycotina</taxon>
        <taxon>Schizosaccharomycetes</taxon>
        <taxon>Schizosaccharomycetales</taxon>
        <taxon>Schizosaccharomycetaceae</taxon>
        <taxon>Schizosaccharomyces</taxon>
    </lineage>
</organism>
<comment type="function">
    <text evidence="4">FAD-dependent sulfhydryl oxidase that catalyzes disulfide bond formation in the endoplasmic reticulum lumen.</text>
</comment>
<comment type="catalytic activity">
    <reaction>
        <text>2 R'C(R)SH + O2 = R'C(R)S-S(R)CR' + H2O2</text>
        <dbReference type="Rhea" id="RHEA:17357"/>
        <dbReference type="ChEBI" id="CHEBI:15379"/>
        <dbReference type="ChEBI" id="CHEBI:16240"/>
        <dbReference type="ChEBI" id="CHEBI:16520"/>
        <dbReference type="ChEBI" id="CHEBI:17412"/>
        <dbReference type="EC" id="1.8.3.2"/>
    </reaction>
</comment>
<comment type="cofactor">
    <cofactor evidence="4">
        <name>FAD</name>
        <dbReference type="ChEBI" id="CHEBI:57692"/>
    </cofactor>
</comment>
<comment type="subcellular location">
    <subcellularLocation>
        <location evidence="1">Endoplasmic reticulum membrane</location>
        <topology evidence="1">Single-pass type III membrane protein</topology>
        <orientation evidence="1">Lumenal side</orientation>
    </subcellularLocation>
    <subcellularLocation>
        <location evidence="5">Cytoplasm</location>
    </subcellularLocation>
    <subcellularLocation>
        <location evidence="5">Nucleus</location>
    </subcellularLocation>
</comment>
<dbReference type="EC" id="1.8.3.2"/>
<dbReference type="EMBL" id="CU329671">
    <property type="protein sequence ID" value="CAB46757.1"/>
    <property type="molecule type" value="Genomic_DNA"/>
</dbReference>
<dbReference type="PIR" id="T39418">
    <property type="entry name" value="T39418"/>
</dbReference>
<dbReference type="RefSeq" id="NP_595393.1">
    <property type="nucleotide sequence ID" value="NM_001021300.2"/>
</dbReference>
<dbReference type="SMR" id="Q9Y806"/>
<dbReference type="BioGRID" id="276274">
    <property type="interactions" value="7"/>
</dbReference>
<dbReference type="FunCoup" id="Q9Y806">
    <property type="interactions" value="203"/>
</dbReference>
<dbReference type="IntAct" id="Q9Y806">
    <property type="interactions" value="1"/>
</dbReference>
<dbReference type="STRING" id="284812.Q9Y806"/>
<dbReference type="iPTMnet" id="Q9Y806"/>
<dbReference type="PaxDb" id="4896-SPBC146.04.1"/>
<dbReference type="EnsemblFungi" id="SPBC146.04.1">
    <property type="protein sequence ID" value="SPBC146.04.1:pep"/>
    <property type="gene ID" value="SPBC146.04"/>
</dbReference>
<dbReference type="GeneID" id="2539721"/>
<dbReference type="KEGG" id="spo:2539721"/>
<dbReference type="PomBase" id="SPBC146.04">
    <property type="gene designation" value="erv2"/>
</dbReference>
<dbReference type="VEuPathDB" id="FungiDB:SPBC146.04"/>
<dbReference type="eggNOG" id="KOG3355">
    <property type="taxonomic scope" value="Eukaryota"/>
</dbReference>
<dbReference type="HOGENOM" id="CLU_070631_2_2_1"/>
<dbReference type="InParanoid" id="Q9Y806"/>
<dbReference type="PhylomeDB" id="Q9Y806"/>
<dbReference type="PRO" id="PR:Q9Y806"/>
<dbReference type="Proteomes" id="UP000002485">
    <property type="component" value="Chromosome II"/>
</dbReference>
<dbReference type="GO" id="GO:0005783">
    <property type="term" value="C:endoplasmic reticulum"/>
    <property type="evidence" value="ECO:0000318"/>
    <property type="project" value="GO_Central"/>
</dbReference>
<dbReference type="GO" id="GO:0005789">
    <property type="term" value="C:endoplasmic reticulum membrane"/>
    <property type="evidence" value="ECO:0000250"/>
    <property type="project" value="PomBase"/>
</dbReference>
<dbReference type="GO" id="GO:0005634">
    <property type="term" value="C:nucleus"/>
    <property type="evidence" value="ECO:0007669"/>
    <property type="project" value="UniProtKB-SubCell"/>
</dbReference>
<dbReference type="GO" id="GO:0050660">
    <property type="term" value="F:flavin adenine dinucleotide binding"/>
    <property type="evidence" value="ECO:0000318"/>
    <property type="project" value="GO_Central"/>
</dbReference>
<dbReference type="GO" id="GO:0016971">
    <property type="term" value="F:flavin-dependent sulfhydryl oxidase activity"/>
    <property type="evidence" value="ECO:0000318"/>
    <property type="project" value="GO_Central"/>
</dbReference>
<dbReference type="GO" id="GO:0034975">
    <property type="term" value="P:protein folding in endoplasmic reticulum"/>
    <property type="evidence" value="ECO:0000305"/>
    <property type="project" value="PomBase"/>
</dbReference>
<dbReference type="GO" id="GO:0042026">
    <property type="term" value="P:protein refolding"/>
    <property type="evidence" value="ECO:0000250"/>
    <property type="project" value="PomBase"/>
</dbReference>
<dbReference type="Gene3D" id="1.20.120.310">
    <property type="entry name" value="ERV/ALR sulfhydryl oxidase domain"/>
    <property type="match status" value="1"/>
</dbReference>
<dbReference type="InterPro" id="IPR039799">
    <property type="entry name" value="ALR/ERV"/>
</dbReference>
<dbReference type="InterPro" id="IPR036774">
    <property type="entry name" value="ERV/ALR_sulphydryl_oxid_sf"/>
</dbReference>
<dbReference type="InterPro" id="IPR017905">
    <property type="entry name" value="ERV/ALR_sulphydryl_oxidase"/>
</dbReference>
<dbReference type="PANTHER" id="PTHR12645">
    <property type="entry name" value="ALR/ERV"/>
    <property type="match status" value="1"/>
</dbReference>
<dbReference type="PANTHER" id="PTHR12645:SF1">
    <property type="entry name" value="FAD-LINKED SULFHYDRYL OXIDASE ERV2"/>
    <property type="match status" value="1"/>
</dbReference>
<dbReference type="Pfam" id="PF04777">
    <property type="entry name" value="Evr1_Alr"/>
    <property type="match status" value="1"/>
</dbReference>
<dbReference type="SUPFAM" id="SSF69000">
    <property type="entry name" value="FAD-dependent thiol oxidase"/>
    <property type="match status" value="1"/>
</dbReference>
<dbReference type="PROSITE" id="PS51324">
    <property type="entry name" value="ERV_ALR"/>
    <property type="match status" value="1"/>
</dbReference>
<name>ERV2_SCHPO</name>
<keyword id="KW-0963">Cytoplasm</keyword>
<keyword id="KW-1015">Disulfide bond</keyword>
<keyword id="KW-0256">Endoplasmic reticulum</keyword>
<keyword id="KW-0274">FAD</keyword>
<keyword id="KW-0285">Flavoprotein</keyword>
<keyword id="KW-0472">Membrane</keyword>
<keyword id="KW-0539">Nucleus</keyword>
<keyword id="KW-0560">Oxidoreductase</keyword>
<keyword id="KW-1185">Reference proteome</keyword>
<keyword id="KW-0735">Signal-anchor</keyword>
<keyword id="KW-0812">Transmembrane</keyword>
<keyword id="KW-1133">Transmembrane helix</keyword>
<gene>
    <name type="primary">erv2</name>
    <name type="ORF">SPBC146.04</name>
</gene>
<proteinExistence type="inferred from homology"/>
<evidence type="ECO:0000250" key="1"/>
<evidence type="ECO:0000250" key="2">
    <source>
        <dbReference type="UniProtKB" id="Q12284"/>
    </source>
</evidence>
<evidence type="ECO:0000255" key="3"/>
<evidence type="ECO:0000255" key="4">
    <source>
        <dbReference type="PROSITE-ProRule" id="PRU00654"/>
    </source>
</evidence>
<evidence type="ECO:0000269" key="5">
    <source>
    </source>
</evidence>